<sequence>MTFQASHRSAWGKSRKKNWQYEGPTQKLFLKRNNVSAPDGPSDPSISVSSEQSGAQQPPALQVERIVDKRKNKKGKTEYLVRWKGYDSEDDTWEPEQHLVNCEEYIHDFNRRHTEKQKESTLTRTNRTSPNNARKQISRSTNSNFSKTSPKALVIGKDHESKNSQLFAASQKFRKNTAPSLSSRKNMDLAKSGIKILVPKSPVKSRTAVDGFQSESPEKLDPVEQGQEDTVAPEVAAEKPVGALLGPGAERARMGSRPRIHPLVPQVPGPVTAAMATGLAVNGKGTSPFMDALTANGTTNIQTSVTGVTASKRKFIDDRRDQPFDKRLRFSVRQTESAYRYRDIVVRKQDGFTHILLSTKSSENNSLNPEVMREVQSALSTAAADDSKLVLLSAVGSVFCCGLDFIYFIRRLTDDRKRESTKMAEAIRNFVNTFIQFKKPIIVAVNGPAIGLGASILPLCDVVWANEKAWFQTPYTTFGQSPDGCSTVMFPKIMGGASANEMLLSGRKLTAQEACGKGLVSQVFWPGTFTQEVMVRIKELASCNPVVLEESKALVRCNMKMELEQANERECEVLKKIWGSAQGMDSMLKYLQRKIDEF</sequence>
<evidence type="ECO:0000250" key="1">
    <source>
        <dbReference type="UniProtKB" id="Q9WTK2"/>
    </source>
</evidence>
<evidence type="ECO:0000255" key="2"/>
<evidence type="ECO:0000255" key="3">
    <source>
        <dbReference type="PROSITE-ProRule" id="PRU00053"/>
    </source>
</evidence>
<evidence type="ECO:0000256" key="4">
    <source>
        <dbReference type="SAM" id="MobiDB-lite"/>
    </source>
</evidence>
<evidence type="ECO:0000269" key="5">
    <source>
    </source>
</evidence>
<evidence type="ECO:0000269" key="6">
    <source>
    </source>
</evidence>
<evidence type="ECO:0000269" key="7">
    <source>
    </source>
</evidence>
<evidence type="ECO:0000269" key="8">
    <source>
    </source>
</evidence>
<evidence type="ECO:0000269" key="9">
    <source>
    </source>
</evidence>
<evidence type="ECO:0000269" key="10">
    <source>
    </source>
</evidence>
<evidence type="ECO:0000269" key="11">
    <source>
    </source>
</evidence>
<evidence type="ECO:0000269" key="12">
    <source>
    </source>
</evidence>
<evidence type="ECO:0000269" key="13">
    <source>
    </source>
</evidence>
<evidence type="ECO:0000269" key="14">
    <source>
    </source>
</evidence>
<evidence type="ECO:0000269" key="15">
    <source>
    </source>
</evidence>
<evidence type="ECO:0000269" key="16">
    <source>
    </source>
</evidence>
<evidence type="ECO:0000303" key="17">
    <source>
    </source>
</evidence>
<evidence type="ECO:0000303" key="18">
    <source>
    </source>
</evidence>
<evidence type="ECO:0000303" key="19">
    <source>
    </source>
</evidence>
<evidence type="ECO:0000303" key="20">
    <source>
    </source>
</evidence>
<evidence type="ECO:0000303" key="21">
    <source>
    </source>
</evidence>
<evidence type="ECO:0000305" key="22"/>
<evidence type="ECO:0000305" key="23">
    <source>
    </source>
</evidence>
<evidence type="ECO:0000312" key="24">
    <source>
        <dbReference type="HGNC" id="HGNC:1811"/>
    </source>
</evidence>
<evidence type="ECO:0007744" key="25">
    <source>
    </source>
</evidence>
<evidence type="ECO:0007744" key="26">
    <source>
    </source>
</evidence>
<evidence type="ECO:0007744" key="27">
    <source>
    </source>
</evidence>
<evidence type="ECO:0007744" key="28">
    <source>
    </source>
</evidence>
<evidence type="ECO:0007744" key="29">
    <source>
    </source>
</evidence>
<evidence type="ECO:0007829" key="30">
    <source>
        <dbReference type="PDB" id="2DNT"/>
    </source>
</evidence>
<evidence type="ECO:0007829" key="31">
    <source>
        <dbReference type="PDB" id="2GTR"/>
    </source>
</evidence>
<accession>Q9Y232</accession>
<accession>A8K6D6</accession>
<accession>B4DLG4</accession>
<accession>Q0VDG7</accession>
<accession>Q32NC5</accession>
<accession>Q5VX99</accession>
<accession>Q6P7T5</accession>
<accession>Q9BWZ2</accession>
<accession>Q9Y424</accession>
<gene>
    <name evidence="17 24" type="primary">CDYL</name>
    <name evidence="20" type="synonym">CDYL1</name>
</gene>
<reference key="1">
    <citation type="journal article" date="1999" name="Nat. Genet.">
        <title>Retroposition of autosomal mRNA yielded testis-specific gene family on human Y chromosome.</title>
        <authorList>
            <person name="Lahn B.T."/>
            <person name="Page D.C."/>
        </authorList>
    </citation>
    <scope>NUCLEOTIDE SEQUENCE [MRNA] (ISOFORM 1)</scope>
    <scope>VARIANTS ALA-2; PRO-9; ALA-48 AND GLY-60</scope>
    <source>
        <tissue>Testis</tissue>
    </source>
</reference>
<reference key="2">
    <citation type="journal article" date="2004" name="Nat. Genet.">
        <title>Complete sequencing and characterization of 21,243 full-length human cDNAs.</title>
        <authorList>
            <person name="Ota T."/>
            <person name="Suzuki Y."/>
            <person name="Nishikawa T."/>
            <person name="Otsuki T."/>
            <person name="Sugiyama T."/>
            <person name="Irie R."/>
            <person name="Wakamatsu A."/>
            <person name="Hayashi K."/>
            <person name="Sato H."/>
            <person name="Nagai K."/>
            <person name="Kimura K."/>
            <person name="Makita H."/>
            <person name="Sekine M."/>
            <person name="Obayashi M."/>
            <person name="Nishi T."/>
            <person name="Shibahara T."/>
            <person name="Tanaka T."/>
            <person name="Ishii S."/>
            <person name="Yamamoto J."/>
            <person name="Saito K."/>
            <person name="Kawai Y."/>
            <person name="Isono Y."/>
            <person name="Nakamura Y."/>
            <person name="Nagahari K."/>
            <person name="Murakami K."/>
            <person name="Yasuda T."/>
            <person name="Iwayanagi T."/>
            <person name="Wagatsuma M."/>
            <person name="Shiratori A."/>
            <person name="Sudo H."/>
            <person name="Hosoiri T."/>
            <person name="Kaku Y."/>
            <person name="Kodaira H."/>
            <person name="Kondo H."/>
            <person name="Sugawara M."/>
            <person name="Takahashi M."/>
            <person name="Kanda K."/>
            <person name="Yokoi T."/>
            <person name="Furuya T."/>
            <person name="Kikkawa E."/>
            <person name="Omura Y."/>
            <person name="Abe K."/>
            <person name="Kamihara K."/>
            <person name="Katsuta N."/>
            <person name="Sato K."/>
            <person name="Tanikawa M."/>
            <person name="Yamazaki M."/>
            <person name="Ninomiya K."/>
            <person name="Ishibashi T."/>
            <person name="Yamashita H."/>
            <person name="Murakawa K."/>
            <person name="Fujimori K."/>
            <person name="Tanai H."/>
            <person name="Kimata M."/>
            <person name="Watanabe M."/>
            <person name="Hiraoka S."/>
            <person name="Chiba Y."/>
            <person name="Ishida S."/>
            <person name="Ono Y."/>
            <person name="Takiguchi S."/>
            <person name="Watanabe S."/>
            <person name="Yosida M."/>
            <person name="Hotuta T."/>
            <person name="Kusano J."/>
            <person name="Kanehori K."/>
            <person name="Takahashi-Fujii A."/>
            <person name="Hara H."/>
            <person name="Tanase T.-O."/>
            <person name="Nomura Y."/>
            <person name="Togiya S."/>
            <person name="Komai F."/>
            <person name="Hara R."/>
            <person name="Takeuchi K."/>
            <person name="Arita M."/>
            <person name="Imose N."/>
            <person name="Musashino K."/>
            <person name="Yuuki H."/>
            <person name="Oshima A."/>
            <person name="Sasaki N."/>
            <person name="Aotsuka S."/>
            <person name="Yoshikawa Y."/>
            <person name="Matsunawa H."/>
            <person name="Ichihara T."/>
            <person name="Shiohata N."/>
            <person name="Sano S."/>
            <person name="Moriya S."/>
            <person name="Momiyama H."/>
            <person name="Satoh N."/>
            <person name="Takami S."/>
            <person name="Terashima Y."/>
            <person name="Suzuki O."/>
            <person name="Nakagawa S."/>
            <person name="Senoh A."/>
            <person name="Mizoguchi H."/>
            <person name="Goto Y."/>
            <person name="Shimizu F."/>
            <person name="Wakebe H."/>
            <person name="Hishigaki H."/>
            <person name="Watanabe T."/>
            <person name="Sugiyama A."/>
            <person name="Takemoto M."/>
            <person name="Kawakami B."/>
            <person name="Yamazaki M."/>
            <person name="Watanabe K."/>
            <person name="Kumagai A."/>
            <person name="Itakura S."/>
            <person name="Fukuzumi Y."/>
            <person name="Fujimori Y."/>
            <person name="Komiyama M."/>
            <person name="Tashiro H."/>
            <person name="Tanigami A."/>
            <person name="Fujiwara T."/>
            <person name="Ono T."/>
            <person name="Yamada K."/>
            <person name="Fujii Y."/>
            <person name="Ozaki K."/>
            <person name="Hirao M."/>
            <person name="Ohmori Y."/>
            <person name="Kawabata A."/>
            <person name="Hikiji T."/>
            <person name="Kobatake N."/>
            <person name="Inagaki H."/>
            <person name="Ikema Y."/>
            <person name="Okamoto S."/>
            <person name="Okitani R."/>
            <person name="Kawakami T."/>
            <person name="Noguchi S."/>
            <person name="Itoh T."/>
            <person name="Shigeta K."/>
            <person name="Senba T."/>
            <person name="Matsumura K."/>
            <person name="Nakajima Y."/>
            <person name="Mizuno T."/>
            <person name="Morinaga M."/>
            <person name="Sasaki M."/>
            <person name="Togashi T."/>
            <person name="Oyama M."/>
            <person name="Hata H."/>
            <person name="Watanabe M."/>
            <person name="Komatsu T."/>
            <person name="Mizushima-Sugano J."/>
            <person name="Satoh T."/>
            <person name="Shirai Y."/>
            <person name="Takahashi Y."/>
            <person name="Nakagawa K."/>
            <person name="Okumura K."/>
            <person name="Nagase T."/>
            <person name="Nomura N."/>
            <person name="Kikuchi H."/>
            <person name="Masuho Y."/>
            <person name="Yamashita R."/>
            <person name="Nakai K."/>
            <person name="Yada T."/>
            <person name="Nakamura Y."/>
            <person name="Ohara O."/>
            <person name="Isogai T."/>
            <person name="Sugano S."/>
        </authorList>
    </citation>
    <scope>NUCLEOTIDE SEQUENCE [LARGE SCALE MRNA] (ISOFORMS 2 AND 4)</scope>
    <source>
        <tissue>Placenta</tissue>
        <tissue>Tongue</tissue>
    </source>
</reference>
<reference key="3">
    <citation type="journal article" date="2003" name="Nature">
        <title>The DNA sequence and analysis of human chromosome 6.</title>
        <authorList>
            <person name="Mungall A.J."/>
            <person name="Palmer S.A."/>
            <person name="Sims S.K."/>
            <person name="Edwards C.A."/>
            <person name="Ashurst J.L."/>
            <person name="Wilming L."/>
            <person name="Jones M.C."/>
            <person name="Horton R."/>
            <person name="Hunt S.E."/>
            <person name="Scott C.E."/>
            <person name="Gilbert J.G.R."/>
            <person name="Clamp M.E."/>
            <person name="Bethel G."/>
            <person name="Milne S."/>
            <person name="Ainscough R."/>
            <person name="Almeida J.P."/>
            <person name="Ambrose K.D."/>
            <person name="Andrews T.D."/>
            <person name="Ashwell R.I.S."/>
            <person name="Babbage A.K."/>
            <person name="Bagguley C.L."/>
            <person name="Bailey J."/>
            <person name="Banerjee R."/>
            <person name="Barker D.J."/>
            <person name="Barlow K.F."/>
            <person name="Bates K."/>
            <person name="Beare D.M."/>
            <person name="Beasley H."/>
            <person name="Beasley O."/>
            <person name="Bird C.P."/>
            <person name="Blakey S.E."/>
            <person name="Bray-Allen S."/>
            <person name="Brook J."/>
            <person name="Brown A.J."/>
            <person name="Brown J.Y."/>
            <person name="Burford D.C."/>
            <person name="Burrill W."/>
            <person name="Burton J."/>
            <person name="Carder C."/>
            <person name="Carter N.P."/>
            <person name="Chapman J.C."/>
            <person name="Clark S.Y."/>
            <person name="Clark G."/>
            <person name="Clee C.M."/>
            <person name="Clegg S."/>
            <person name="Cobley V."/>
            <person name="Collier R.E."/>
            <person name="Collins J.E."/>
            <person name="Colman L.K."/>
            <person name="Corby N.R."/>
            <person name="Coville G.J."/>
            <person name="Culley K.M."/>
            <person name="Dhami P."/>
            <person name="Davies J."/>
            <person name="Dunn M."/>
            <person name="Earthrowl M.E."/>
            <person name="Ellington A.E."/>
            <person name="Evans K.A."/>
            <person name="Faulkner L."/>
            <person name="Francis M.D."/>
            <person name="Frankish A."/>
            <person name="Frankland J."/>
            <person name="French L."/>
            <person name="Garner P."/>
            <person name="Garnett J."/>
            <person name="Ghori M.J."/>
            <person name="Gilby L.M."/>
            <person name="Gillson C.J."/>
            <person name="Glithero R.J."/>
            <person name="Grafham D.V."/>
            <person name="Grant M."/>
            <person name="Gribble S."/>
            <person name="Griffiths C."/>
            <person name="Griffiths M.N.D."/>
            <person name="Hall R."/>
            <person name="Halls K.S."/>
            <person name="Hammond S."/>
            <person name="Harley J.L."/>
            <person name="Hart E.A."/>
            <person name="Heath P.D."/>
            <person name="Heathcott R."/>
            <person name="Holmes S.J."/>
            <person name="Howden P.J."/>
            <person name="Howe K.L."/>
            <person name="Howell G.R."/>
            <person name="Huckle E."/>
            <person name="Humphray S.J."/>
            <person name="Humphries M.D."/>
            <person name="Hunt A.R."/>
            <person name="Johnson C.M."/>
            <person name="Joy A.A."/>
            <person name="Kay M."/>
            <person name="Keenan S.J."/>
            <person name="Kimberley A.M."/>
            <person name="King A."/>
            <person name="Laird G.K."/>
            <person name="Langford C."/>
            <person name="Lawlor S."/>
            <person name="Leongamornlert D.A."/>
            <person name="Leversha M."/>
            <person name="Lloyd C.R."/>
            <person name="Lloyd D.M."/>
            <person name="Loveland J.E."/>
            <person name="Lovell J."/>
            <person name="Martin S."/>
            <person name="Mashreghi-Mohammadi M."/>
            <person name="Maslen G.L."/>
            <person name="Matthews L."/>
            <person name="McCann O.T."/>
            <person name="McLaren S.J."/>
            <person name="McLay K."/>
            <person name="McMurray A."/>
            <person name="Moore M.J.F."/>
            <person name="Mullikin J.C."/>
            <person name="Niblett D."/>
            <person name="Nickerson T."/>
            <person name="Novik K.L."/>
            <person name="Oliver K."/>
            <person name="Overton-Larty E.K."/>
            <person name="Parker A."/>
            <person name="Patel R."/>
            <person name="Pearce A.V."/>
            <person name="Peck A.I."/>
            <person name="Phillimore B.J.C.T."/>
            <person name="Phillips S."/>
            <person name="Plumb R.W."/>
            <person name="Porter K.M."/>
            <person name="Ramsey Y."/>
            <person name="Ranby S.A."/>
            <person name="Rice C.M."/>
            <person name="Ross M.T."/>
            <person name="Searle S.M."/>
            <person name="Sehra H.K."/>
            <person name="Sheridan E."/>
            <person name="Skuce C.D."/>
            <person name="Smith S."/>
            <person name="Smith M."/>
            <person name="Spraggon L."/>
            <person name="Squares S.L."/>
            <person name="Steward C.A."/>
            <person name="Sycamore N."/>
            <person name="Tamlyn-Hall G."/>
            <person name="Tester J."/>
            <person name="Theaker A.J."/>
            <person name="Thomas D.W."/>
            <person name="Thorpe A."/>
            <person name="Tracey A."/>
            <person name="Tromans A."/>
            <person name="Tubby B."/>
            <person name="Wall M."/>
            <person name="Wallis J.M."/>
            <person name="West A.P."/>
            <person name="White S.S."/>
            <person name="Whitehead S.L."/>
            <person name="Whittaker H."/>
            <person name="Wild A."/>
            <person name="Willey D.J."/>
            <person name="Wilmer T.E."/>
            <person name="Wood J.M."/>
            <person name="Wray P.W."/>
            <person name="Wyatt J.C."/>
            <person name="Young L."/>
            <person name="Younger R.M."/>
            <person name="Bentley D.R."/>
            <person name="Coulson A."/>
            <person name="Durbin R.M."/>
            <person name="Hubbard T."/>
            <person name="Sulston J.E."/>
            <person name="Dunham I."/>
            <person name="Rogers J."/>
            <person name="Beck S."/>
        </authorList>
    </citation>
    <scope>NUCLEOTIDE SEQUENCE [LARGE SCALE GENOMIC DNA]</scope>
</reference>
<reference key="4">
    <citation type="journal article" date="2004" name="Genome Res.">
        <title>The status, quality, and expansion of the NIH full-length cDNA project: the Mammalian Gene Collection (MGC).</title>
        <authorList>
            <consortium name="The MGC Project Team"/>
        </authorList>
    </citation>
    <scope>NUCLEOTIDE SEQUENCE [LARGE SCALE MRNA] (ISOFORMS 2 AND 3)</scope>
    <scope>NUCLEOTIDE SEQUENCE [LARGE SCALE MRNA] OF 253-598 (ISOFORM 1)</scope>
    <source>
        <tissue>Eye</tissue>
        <tissue>Uterus</tissue>
    </source>
</reference>
<reference key="5">
    <citation type="journal article" date="2007" name="BMC Genomics">
        <title>The full-ORF clone resource of the German cDNA consortium.</title>
        <authorList>
            <person name="Bechtel S."/>
            <person name="Rosenfelder H."/>
            <person name="Duda A."/>
            <person name="Schmidt C.P."/>
            <person name="Ernst U."/>
            <person name="Wellenreuther R."/>
            <person name="Mehrle A."/>
            <person name="Schuster C."/>
            <person name="Bahr A."/>
            <person name="Bloecker H."/>
            <person name="Heubner D."/>
            <person name="Hoerlein A."/>
            <person name="Michel G."/>
            <person name="Wedler H."/>
            <person name="Koehrer K."/>
            <person name="Ottenwaelder B."/>
            <person name="Poustka A."/>
            <person name="Wiemann S."/>
            <person name="Schupp I."/>
        </authorList>
    </citation>
    <scope>NUCLEOTIDE SEQUENCE [LARGE SCALE MRNA] OF 337-598</scope>
    <source>
        <tissue>Uterus</tissue>
    </source>
</reference>
<reference key="6">
    <citation type="journal article" date="2002" name="Proc. Natl. Acad. Sci. U.S.A.">
        <title>Previously uncharacterized histone acetyltransferases implicated in mammalian spermatogenesis.</title>
        <authorList>
            <person name="Lahn B.T."/>
            <person name="Tang Z.L."/>
            <person name="Zhou J."/>
            <person name="Barndt R.J."/>
            <person name="Parvinen M."/>
            <person name="Allis C.D."/>
            <person name="Page D.C."/>
        </authorList>
    </citation>
    <scope>CAUTION</scope>
</reference>
<reference key="7">
    <citation type="journal article" date="2006" name="Cell">
        <title>Global, in vivo, and site-specific phosphorylation dynamics in signaling networks.</title>
        <authorList>
            <person name="Olsen J.V."/>
            <person name="Blagoev B."/>
            <person name="Gnad F."/>
            <person name="Macek B."/>
            <person name="Kumar C."/>
            <person name="Mortensen P."/>
            <person name="Mann M."/>
        </authorList>
    </citation>
    <scope>IDENTIFICATION BY MASS SPECTROMETRY [LARGE SCALE ANALYSIS]</scope>
    <source>
        <tissue>Cervix carcinoma</tissue>
    </source>
</reference>
<reference key="8">
    <citation type="journal article" date="2008" name="J. Biol. Chem.">
        <title>Specificity of the chromodomain Y chromosome family of chromodomains for lysine-methylated ARK(S/T) motifs.</title>
        <authorList>
            <person name="Fischle W."/>
            <person name="Franz H."/>
            <person name="Jacobs S.A."/>
            <person name="Allis C.D."/>
            <person name="Khorasanizadeh S."/>
        </authorList>
    </citation>
    <scope>SUBCELLULAR LOCATION</scope>
</reference>
<reference key="9">
    <citation type="journal article" date="2008" name="J. Proteome Res.">
        <title>Combining protein-based IMAC, peptide-based IMAC, and MudPIT for efficient phosphoproteomic analysis.</title>
        <authorList>
            <person name="Cantin G.T."/>
            <person name="Yi W."/>
            <person name="Lu B."/>
            <person name="Park S.K."/>
            <person name="Xu T."/>
            <person name="Lee J.-D."/>
            <person name="Yates J.R. III"/>
        </authorList>
    </citation>
    <scope>IDENTIFICATION BY MASS SPECTROMETRY [LARGE SCALE ANALYSIS]</scope>
    <source>
        <tissue>Cervix carcinoma</tissue>
    </source>
</reference>
<reference key="10">
    <citation type="journal article" date="2008" name="Mol. Cell">
        <title>CDYL bridges REST and histone methyltransferases for gene repression and suppression of cellular transformation.</title>
        <authorList>
            <person name="Mulligan P."/>
            <person name="Westbrook T.F."/>
            <person name="Ottinger M."/>
            <person name="Pavlova N."/>
            <person name="Chang B."/>
            <person name="Macia E."/>
            <person name="Shi Y.J."/>
            <person name="Barretina J."/>
            <person name="Liu J."/>
            <person name="Howley P.M."/>
            <person name="Elledge S.J."/>
            <person name="Shi Y."/>
        </authorList>
    </citation>
    <scope>FUNCTION</scope>
    <scope>INTERACTION WITH REST; EHMT1 AND EHMT2</scope>
    <scope>IDENTIFICATION IN A COMPLEX WITH REST; WIZ; SETB1; EHMT1 AND EHMT2</scope>
    <scope>IDENTIFICATION IN A COMPLEX WITH MIER1; MIER2; HDAC1 AND HDAC2</scope>
</reference>
<reference key="11">
    <citation type="journal article" date="2008" name="Nat. Chem. Biol.">
        <title>Protein lysine methyltransferase G9a acts on non-histone targets.</title>
        <authorList>
            <person name="Rathert P."/>
            <person name="Dhayalan A."/>
            <person name="Murakami M."/>
            <person name="Zhang X."/>
            <person name="Tamas R."/>
            <person name="Jurkowska R."/>
            <person name="Komatsu Y."/>
            <person name="Shinkai Y."/>
            <person name="Cheng X."/>
            <person name="Jeltsch A."/>
        </authorList>
    </citation>
    <scope>METHYLATION AT LYS-135</scope>
    <scope>IDENTIFICATION BY MASS SPECTROMETRY</scope>
</reference>
<reference key="12">
    <citation type="journal article" date="2008" name="Proc. Natl. Acad. Sci. U.S.A.">
        <title>A quantitative atlas of mitotic phosphorylation.</title>
        <authorList>
            <person name="Dephoure N."/>
            <person name="Zhou C."/>
            <person name="Villen J."/>
            <person name="Beausoleil S.A."/>
            <person name="Bakalarski C.E."/>
            <person name="Elledge S.J."/>
            <person name="Gygi S.P."/>
        </authorList>
    </citation>
    <scope>PHOSPHORYLATION [LARGE SCALE ANALYSIS] AT SER-88 AND SER-216</scope>
    <scope>IDENTIFICATION BY MASS SPECTROMETRY [LARGE SCALE ANALYSIS]</scope>
    <source>
        <tissue>Cervix carcinoma</tissue>
    </source>
</reference>
<reference key="13">
    <citation type="journal article" date="2009" name="J. Biol. Chem.">
        <title>Multimerization and H3K9me3 binding are required for CDYL1b heterochromatin association.</title>
        <authorList>
            <person name="Franz H."/>
            <person name="Mosch K."/>
            <person name="Soeroes S."/>
            <person name="Urlaub H."/>
            <person name="Fischle W."/>
        </authorList>
    </citation>
    <scope>FUNCTION (ISOFORM2 1; 2 AND 3)</scope>
    <scope>SUBUNIT</scope>
    <scope>SUBCELLULAR LOCATION</scope>
    <scope>INTERACTION WITH H3K9ME3</scope>
    <scope>TISSUE SPECIFICITY</scope>
</reference>
<reference key="14">
    <citation type="journal article" date="2010" name="J. Biol. Chem.">
        <authorList>
            <person name="Franz H."/>
            <person name="Mosch K."/>
            <person name="Soeroes S."/>
            <person name="Urlaub H."/>
            <person name="Fischle W."/>
        </authorList>
    </citation>
    <scope>ERRATUM OF PUBMED:19808672</scope>
</reference>
<reference key="15">
    <citation type="journal article" date="2010" name="Sci. Signal.">
        <title>Quantitative phosphoproteomics reveals widespread full phosphorylation site occupancy during mitosis.</title>
        <authorList>
            <person name="Olsen J.V."/>
            <person name="Vermeulen M."/>
            <person name="Santamaria A."/>
            <person name="Kumar C."/>
            <person name="Miller M.L."/>
            <person name="Jensen L.J."/>
            <person name="Gnad F."/>
            <person name="Cox J."/>
            <person name="Jensen T.S."/>
            <person name="Nigg E.A."/>
            <person name="Brunak S."/>
            <person name="Mann M."/>
        </authorList>
    </citation>
    <scope>PHOSPHORYLATION [LARGE SCALE ANALYSIS] AT SER-201 AND SER-216</scope>
    <scope>IDENTIFICATION BY MASS SPECTROMETRY [LARGE SCALE ANALYSIS]</scope>
    <source>
        <tissue>Cervix carcinoma</tissue>
    </source>
</reference>
<reference key="16">
    <citation type="journal article" date="2011" name="J. Biol. Chem.">
        <title>Corepressor protein CDYL functions as a molecular bridge between polycomb repressor complex 2 and repressive chromatin mark trimethylated histone lysine 27.</title>
        <authorList>
            <person name="Zhang Y."/>
            <person name="Yang X."/>
            <person name="Gui B."/>
            <person name="Xie G."/>
            <person name="Zhang D."/>
            <person name="Shang Y."/>
            <person name="Liang J."/>
        </authorList>
    </citation>
    <scope>FUNCTION</scope>
    <scope>INTERACTION WITH HISTONE H3K9ME3; HISTONE H3K27ME2; HISTONE H3K27ME3; EZH2; EED AND SUZ12</scope>
</reference>
<reference key="17">
    <citation type="journal article" date="2011" name="Sci. Signal.">
        <title>System-wide temporal characterization of the proteome and phosphoproteome of human embryonic stem cell differentiation.</title>
        <authorList>
            <person name="Rigbolt K.T."/>
            <person name="Prokhorova T.A."/>
            <person name="Akimov V."/>
            <person name="Henningsen J."/>
            <person name="Johansen P.T."/>
            <person name="Kratchmarova I."/>
            <person name="Kassem M."/>
            <person name="Mann M."/>
            <person name="Olsen J.V."/>
            <person name="Blagoev B."/>
        </authorList>
    </citation>
    <scope>PHOSPHORYLATION [LARGE SCALE ANALYSIS] AT SER-216</scope>
    <scope>IDENTIFICATION BY MASS SPECTROMETRY [LARGE SCALE ANALYSIS]</scope>
</reference>
<reference key="18">
    <citation type="journal article" date="2013" name="J. Proteome Res.">
        <title>Toward a comprehensive characterization of a human cancer cell phosphoproteome.</title>
        <authorList>
            <person name="Zhou H."/>
            <person name="Di Palma S."/>
            <person name="Preisinger C."/>
            <person name="Peng M."/>
            <person name="Polat A.N."/>
            <person name="Heck A.J."/>
            <person name="Mohammed S."/>
        </authorList>
    </citation>
    <scope>PHOSPHORYLATION [LARGE SCALE ANALYSIS] AT SER-170; SER-201 AND SER-216</scope>
    <scope>IDENTIFICATION BY MASS SPECTROMETRY [LARGE SCALE ANALYSIS]</scope>
    <source>
        <tissue>Cervix carcinoma</tissue>
        <tissue>Erythroleukemia</tissue>
    </source>
</reference>
<reference key="19">
    <citation type="journal article" date="2014" name="J. Proteomics">
        <title>An enzyme assisted RP-RPLC approach for in-depth analysis of human liver phosphoproteome.</title>
        <authorList>
            <person name="Bian Y."/>
            <person name="Song C."/>
            <person name="Cheng K."/>
            <person name="Dong M."/>
            <person name="Wang F."/>
            <person name="Huang J."/>
            <person name="Sun D."/>
            <person name="Wang L."/>
            <person name="Ye M."/>
            <person name="Zou H."/>
        </authorList>
    </citation>
    <scope>PHOSPHORYLATION [LARGE SCALE ANALYSIS] AT SER-201</scope>
    <scope>IDENTIFICATION BY MASS SPECTROMETRY [LARGE SCALE ANALYSIS]</scope>
    <source>
        <tissue>Liver</tissue>
    </source>
</reference>
<reference key="20">
    <citation type="journal article" date="2017" name="J. Mol. Cell Biol.">
        <title>Chromodomain protein CDYL is required for transmission/restoration of repressive histone marks.</title>
        <authorList>
            <person name="Liu Y."/>
            <person name="Liu S."/>
            <person name="Yuan S."/>
            <person name="Yu H."/>
            <person name="Zhang Y."/>
            <person name="Yang X."/>
            <person name="Xie G."/>
            <person name="Chen Z."/>
            <person name="Li W."/>
            <person name="Xu B."/>
            <person name="Sun L."/>
            <person name="Shang Y."/>
            <person name="Liang J."/>
        </authorList>
    </citation>
    <scope>FUNCTION</scope>
    <scope>SUBCELLULAR LOCATION</scope>
    <scope>INTERACTION WITH CHAF1A; CHAF1B; MCM3 AND MCM5</scope>
</reference>
<reference key="21">
    <citation type="journal article" date="2017" name="Mol. Cell">
        <title>Chromodomain protein CDYL acts as a crotonyl-CoA hydratase to regulate histone crotonylation and spermatogenesis.</title>
        <authorList>
            <person name="Liu S."/>
            <person name="Yu H."/>
            <person name="Liu Y."/>
            <person name="Liu X."/>
            <person name="Zhang Y."/>
            <person name="Bu C."/>
            <person name="Yuan S."/>
            <person name="Chen Z."/>
            <person name="Xie G."/>
            <person name="Li W."/>
            <person name="Xu B."/>
            <person name="Yang J."/>
            <person name="He L."/>
            <person name="Jin T."/>
            <person name="Xiong Y."/>
            <person name="Sun L."/>
            <person name="Liu X."/>
            <person name="Han C."/>
            <person name="Cheng Z."/>
            <person name="Liang J."/>
            <person name="Shang Y."/>
        </authorList>
    </citation>
    <scope>FUNCTION (ISOFORM 2)</scope>
    <scope>CATALYTIC ACTIVITY</scope>
    <scope>BIOPHYSICOCHEMICAL PROPERTIES</scope>
    <scope>MUTAGENESIS OF SER-521</scope>
</reference>
<reference key="22">
    <citation type="journal article" date="2017" name="Nat. Commun.">
        <title>CDYL suppresses epileptogenesis in mice through repression of axonal Nav1.6 sodium channel expression.</title>
        <authorList>
            <person name="Liu Y."/>
            <person name="Lai S."/>
            <person name="Ma W."/>
            <person name="Ke W."/>
            <person name="Zhang C."/>
            <person name="Liu S."/>
            <person name="Zhang Y."/>
            <person name="Pei F."/>
            <person name="Li S."/>
            <person name="Yi M."/>
            <person name="Shu Y."/>
            <person name="Shang Y."/>
            <person name="Liang J."/>
            <person name="Huang Z."/>
        </authorList>
    </citation>
    <scope>TISSUE SPECIFICITY</scope>
</reference>
<reference key="23">
    <citation type="journal article" date="2018" name="J. Mol. Cell Biol.">
        <title>CDYL1 fosters double-strand break-induced transcription silencing and promotes homology-directed repair.</title>
        <authorList>
            <person name="Abu-Zhayia E.R."/>
            <person name="Awwad S.W."/>
            <person name="Ben-Oz B.M."/>
            <person name="Khoury-Haddad H."/>
            <person name="Ayoub N."/>
        </authorList>
    </citation>
    <scope>FUNCTION</scope>
    <scope>SUBCELLULAR LOCATION</scope>
    <scope>MUTAGENESIS OF SER-205</scope>
</reference>
<reference key="24">
    <citation type="journal article" date="2009" name="Proteins">
        <title>Crystal structures of human CDY proteins reveal a crotonase-like fold.</title>
        <authorList>
            <person name="Wu H."/>
            <person name="Min J."/>
            <person name="Antoshenko T."/>
            <person name="Plotnikov A.N."/>
        </authorList>
    </citation>
    <scope>X-RAY CRYSTALLOGRAPHY (1.9 ANGSTROMS) OF 338-598</scope>
</reference>
<reference key="25">
    <citation type="submission" date="2006-10" db="PDB data bank">
        <title>Solution structure of RSGI RUH-064, a chromo domain from human cDNA.</title>
        <authorList>
            <consortium name="RIKEN structural genomics initiative (RSGI)"/>
        </authorList>
    </citation>
    <scope>STRUCTURE BY NMR OF 55-120</scope>
</reference>
<protein>
    <recommendedName>
        <fullName evidence="17">Chromodomain Y-like protein</fullName>
        <shortName evidence="17">CDY-like</shortName>
    </recommendedName>
    <alternativeName>
        <fullName evidence="21">Crotonyl-CoA hydratase</fullName>
        <ecNumber evidence="14">4.2.1.-</ecNumber>
    </alternativeName>
</protein>
<feature type="chain" id="PRO_0000080221" description="Chromodomain Y-like protein">
    <location>
        <begin position="1"/>
        <end position="598"/>
    </location>
</feature>
<feature type="domain" description="Chromo" evidence="3">
    <location>
        <begin position="61"/>
        <end position="121"/>
    </location>
</feature>
<feature type="region of interest" description="Disordered" evidence="4">
    <location>
        <begin position="1"/>
        <end position="76"/>
    </location>
</feature>
<feature type="region of interest" description="Interaction with EZH2" evidence="12">
    <location>
        <begin position="61"/>
        <end position="309"/>
    </location>
</feature>
<feature type="region of interest" description="Disordered" evidence="4">
    <location>
        <begin position="112"/>
        <end position="149"/>
    </location>
</feature>
<feature type="region of interest" description="Disordered" evidence="4">
    <location>
        <begin position="204"/>
        <end position="226"/>
    </location>
</feature>
<feature type="region of interest" description="Acetyl-CoA-binding domain" evidence="2">
    <location>
        <begin position="362"/>
        <end position="594"/>
    </location>
</feature>
<feature type="compositionally biased region" description="Polar residues" evidence="4">
    <location>
        <begin position="44"/>
        <end position="56"/>
    </location>
</feature>
<feature type="compositionally biased region" description="Basic and acidic residues" evidence="4">
    <location>
        <begin position="65"/>
        <end position="76"/>
    </location>
</feature>
<feature type="compositionally biased region" description="Basic and acidic residues" evidence="4">
    <location>
        <begin position="112"/>
        <end position="121"/>
    </location>
</feature>
<feature type="compositionally biased region" description="Polar residues" evidence="4">
    <location>
        <begin position="122"/>
        <end position="149"/>
    </location>
</feature>
<feature type="modified residue" description="Phosphoserine" evidence="25">
    <location>
        <position position="88"/>
    </location>
</feature>
<feature type="modified residue" description="N6,N6,N6-trimethyllysine; by EHMT2; alternate" evidence="7">
    <location>
        <position position="135"/>
    </location>
</feature>
<feature type="modified residue" description="N6,N6-dimethyllysine; by EHMT2; alternate" evidence="7">
    <location>
        <position position="135"/>
    </location>
</feature>
<feature type="modified residue" description="N6-methyllysine; by EHMT2; alternate" evidence="7">
    <location>
        <position position="135"/>
    </location>
</feature>
<feature type="modified residue" description="Phosphoserine" evidence="28">
    <location>
        <position position="170"/>
    </location>
</feature>
<feature type="modified residue" description="Phosphoserine" evidence="26 28 29">
    <location>
        <position position="201"/>
    </location>
</feature>
<feature type="modified residue" description="Phosphoserine" evidence="25 26 27 28">
    <location>
        <position position="216"/>
    </location>
</feature>
<feature type="splice variant" id="VSP_026382" description="In isoform 3." evidence="19">
    <location>
        <begin position="1"/>
        <end position="289"/>
    </location>
</feature>
<feature type="splice variant" id="VSP_041025" description="In isoform 4." evidence="18">
    <location>
        <begin position="1"/>
        <end position="186"/>
    </location>
</feature>
<feature type="splice variant" id="VSP_026383" description="In isoform 2." evidence="18 19">
    <location>
        <begin position="1"/>
        <end position="54"/>
    </location>
</feature>
<feature type="splice variant" id="VSP_026384" description="In isoform 2." evidence="18 19">
    <original>AQQPPALQ</original>
    <variation>MASEELYE</variation>
    <location>
        <begin position="55"/>
        <end position="62"/>
    </location>
</feature>
<feature type="sequence variant" id="VAR_032936" description="In dbSNP:rs3812179." evidence="5">
    <original>T</original>
    <variation>A</variation>
    <location>
        <position position="2"/>
    </location>
</feature>
<feature type="sequence variant" id="VAR_032937" description="In dbSNP:rs3812178." evidence="5">
    <original>S</original>
    <variation>P</variation>
    <location>
        <position position="9"/>
    </location>
</feature>
<feature type="sequence variant" id="VAR_032938" description="In dbSNP:rs13196069." evidence="5">
    <original>V</original>
    <variation>A</variation>
    <location>
        <position position="48"/>
    </location>
</feature>
<feature type="sequence variant" id="VAR_032939" description="In dbSNP:rs28360500." evidence="5">
    <original>A</original>
    <variation>G</variation>
    <location>
        <position position="60"/>
    </location>
</feature>
<feature type="mutagenesis site" description="No impact on recruitment to DNA double strand breaks." evidence="16">
    <original>S</original>
    <variation>A</variation>
    <location>
        <position position="205"/>
    </location>
</feature>
<feature type="mutagenesis site" description="Abolishes CoA-binding and ability to inhibit histone crotonylation." evidence="14">
    <original>S</original>
    <variation>A</variation>
    <location>
        <position position="521"/>
    </location>
</feature>
<feature type="sequence conflict" description="In Ref. 2; BAF84290." evidence="22" ref="2">
    <original>S</original>
    <variation>N</variation>
    <location>
        <position position="205"/>
    </location>
</feature>
<feature type="sequence conflict" description="In Ref. 2; BAG59526." evidence="22" ref="2">
    <original>D</original>
    <variation>N</variation>
    <location>
        <position position="291"/>
    </location>
</feature>
<feature type="sequence conflict" description="In Ref. 2; BAF84290." evidence="22" ref="2">
    <original>V</original>
    <variation>L</variation>
    <location>
        <position position="443"/>
    </location>
</feature>
<feature type="sequence conflict" description="In Ref. 2; BAG59526." evidence="22" ref="2">
    <original>N</original>
    <variation>S</variation>
    <location>
        <position position="558"/>
    </location>
</feature>
<feature type="sequence conflict" description="In Ref. 4; AAI19683." evidence="22" ref="4">
    <original>M</original>
    <variation>T</variation>
    <location>
        <position position="584"/>
    </location>
</feature>
<feature type="sequence conflict" description="In Ref. 4; AAI19683." evidence="22" ref="4">
    <original>L</original>
    <variation>M</variation>
    <location>
        <position position="591"/>
    </location>
</feature>
<feature type="strand" evidence="30">
    <location>
        <begin position="66"/>
        <end position="71"/>
    </location>
</feature>
<feature type="strand" evidence="30">
    <location>
        <begin position="77"/>
        <end position="81"/>
    </location>
</feature>
<feature type="helix" evidence="30">
    <location>
        <begin position="88"/>
        <end position="90"/>
    </location>
</feature>
<feature type="strand" evidence="30">
    <location>
        <begin position="92"/>
        <end position="95"/>
    </location>
</feature>
<feature type="turn" evidence="30">
    <location>
        <begin position="96"/>
        <end position="98"/>
    </location>
</feature>
<feature type="helix" evidence="30">
    <location>
        <begin position="103"/>
        <end position="113"/>
    </location>
</feature>
<feature type="strand" evidence="31">
    <location>
        <begin position="342"/>
        <end position="349"/>
    </location>
</feature>
<feature type="strand" evidence="31">
    <location>
        <begin position="352"/>
        <end position="357"/>
    </location>
</feature>
<feature type="strand" evidence="31">
    <location>
        <begin position="360"/>
        <end position="363"/>
    </location>
</feature>
<feature type="helix" evidence="31">
    <location>
        <begin position="369"/>
        <end position="384"/>
    </location>
</feature>
<feature type="strand" evidence="31">
    <location>
        <begin position="390"/>
        <end position="397"/>
    </location>
</feature>
<feature type="helix" evidence="31">
    <location>
        <begin position="405"/>
        <end position="414"/>
    </location>
</feature>
<feature type="helix" evidence="31">
    <location>
        <begin position="416"/>
        <end position="436"/>
    </location>
</feature>
<feature type="strand" evidence="31">
    <location>
        <begin position="441"/>
        <end position="445"/>
    </location>
</feature>
<feature type="helix" evidence="31">
    <location>
        <begin position="452"/>
        <end position="455"/>
    </location>
</feature>
<feature type="helix" evidence="31">
    <location>
        <begin position="457"/>
        <end position="459"/>
    </location>
</feature>
<feature type="strand" evidence="31">
    <location>
        <begin position="460"/>
        <end position="466"/>
    </location>
</feature>
<feature type="strand" evidence="31">
    <location>
        <begin position="470"/>
        <end position="472"/>
    </location>
</feature>
<feature type="turn" evidence="31">
    <location>
        <begin position="475"/>
        <end position="479"/>
    </location>
</feature>
<feature type="helix" evidence="31">
    <location>
        <begin position="486"/>
        <end position="494"/>
    </location>
</feature>
<feature type="helix" evidence="31">
    <location>
        <begin position="496"/>
        <end position="505"/>
    </location>
</feature>
<feature type="helix" evidence="31">
    <location>
        <begin position="511"/>
        <end position="516"/>
    </location>
</feature>
<feature type="strand" evidence="31">
    <location>
        <begin position="521"/>
        <end position="524"/>
    </location>
</feature>
<feature type="helix" evidence="31">
    <location>
        <begin position="526"/>
        <end position="528"/>
    </location>
</feature>
<feature type="helix" evidence="31">
    <location>
        <begin position="529"/>
        <end position="541"/>
    </location>
</feature>
<feature type="helix" evidence="31">
    <location>
        <begin position="545"/>
        <end position="556"/>
    </location>
</feature>
<feature type="turn" evidence="31">
    <location>
        <begin position="557"/>
        <end position="559"/>
    </location>
</feature>
<feature type="helix" evidence="31">
    <location>
        <begin position="560"/>
        <end position="579"/>
    </location>
</feature>
<feature type="turn" evidence="31">
    <location>
        <begin position="581"/>
        <end position="584"/>
    </location>
</feature>
<feature type="helix" evidence="31">
    <location>
        <begin position="585"/>
        <end position="596"/>
    </location>
</feature>
<keyword id="KW-0002">3D-structure</keyword>
<keyword id="KW-0025">Alternative splicing</keyword>
<keyword id="KW-0158">Chromosome</keyword>
<keyword id="KW-0221">Differentiation</keyword>
<keyword id="KW-0456">Lyase</keyword>
<keyword id="KW-0488">Methylation</keyword>
<keyword id="KW-0539">Nucleus</keyword>
<keyword id="KW-0597">Phosphoprotein</keyword>
<keyword id="KW-1267">Proteomics identification</keyword>
<keyword id="KW-1185">Reference proteome</keyword>
<keyword id="KW-0678">Repressor</keyword>
<keyword id="KW-0744">Spermatogenesis</keyword>
<keyword id="KW-0804">Transcription</keyword>
<keyword id="KW-0805">Transcription regulation</keyword>
<proteinExistence type="evidence at protein level"/>
<name>CDYL_HUMAN</name>
<dbReference type="EC" id="4.2.1.-" evidence="14"/>
<dbReference type="EMBL" id="AF081258">
    <property type="protein sequence ID" value="AAD22734.1"/>
    <property type="molecule type" value="mRNA"/>
</dbReference>
<dbReference type="EMBL" id="AF081259">
    <property type="protein sequence ID" value="AAD22735.1"/>
    <property type="molecule type" value="mRNA"/>
</dbReference>
<dbReference type="EMBL" id="AK291601">
    <property type="protein sequence ID" value="BAF84290.1"/>
    <property type="molecule type" value="mRNA"/>
</dbReference>
<dbReference type="EMBL" id="AK296985">
    <property type="protein sequence ID" value="BAG59526.1"/>
    <property type="molecule type" value="mRNA"/>
</dbReference>
<dbReference type="EMBL" id="AL022725">
    <property type="status" value="NOT_ANNOTATED_CDS"/>
    <property type="molecule type" value="Genomic_DNA"/>
</dbReference>
<dbReference type="EMBL" id="AL356747">
    <property type="status" value="NOT_ANNOTATED_CDS"/>
    <property type="molecule type" value="Genomic_DNA"/>
</dbReference>
<dbReference type="EMBL" id="AL359643">
    <property type="status" value="NOT_ANNOTATED_CDS"/>
    <property type="molecule type" value="Genomic_DNA"/>
</dbReference>
<dbReference type="EMBL" id="BC061516">
    <property type="protein sequence ID" value="AAH61516.1"/>
    <property type="molecule type" value="mRNA"/>
</dbReference>
<dbReference type="EMBL" id="BC108725">
    <property type="protein sequence ID" value="AAI08726.1"/>
    <property type="molecule type" value="mRNA"/>
</dbReference>
<dbReference type="EMBL" id="BC119682">
    <property type="protein sequence ID" value="AAI19683.1"/>
    <property type="molecule type" value="mRNA"/>
</dbReference>
<dbReference type="EMBL" id="AL050164">
    <property type="protein sequence ID" value="CAB43304.1"/>
    <property type="status" value="ALT_SEQ"/>
    <property type="molecule type" value="mRNA"/>
</dbReference>
<dbReference type="CCDS" id="CCDS4491.2">
    <molecule id="Q9Y232-2"/>
</dbReference>
<dbReference type="CCDS" id="CCDS47364.1">
    <molecule id="Q9Y232-4"/>
</dbReference>
<dbReference type="CCDS" id="CCDS93853.1">
    <molecule id="Q9Y232-1"/>
</dbReference>
<dbReference type="PIR" id="T08789">
    <property type="entry name" value="T08789"/>
</dbReference>
<dbReference type="RefSeq" id="NP_001137442.1">
    <molecule id="Q9Y232-4"/>
    <property type="nucleotide sequence ID" value="NM_001143970.2"/>
</dbReference>
<dbReference type="RefSeq" id="NP_001137443.1">
    <molecule id="Q9Y232-4"/>
    <property type="nucleotide sequence ID" value="NM_001143971.2"/>
</dbReference>
<dbReference type="RefSeq" id="NP_001355054.1">
    <molecule id="Q9Y232-1"/>
    <property type="nucleotide sequence ID" value="NM_001368125.1"/>
</dbReference>
<dbReference type="RefSeq" id="NP_001355056.1">
    <molecule id="Q9Y232-3"/>
    <property type="nucleotide sequence ID" value="NM_001368127.1"/>
</dbReference>
<dbReference type="RefSeq" id="NP_004815.3">
    <molecule id="Q9Y232-2"/>
    <property type="nucleotide sequence ID" value="NM_004824.3"/>
</dbReference>
<dbReference type="RefSeq" id="XP_047275519.1">
    <molecule id="Q9Y232-4"/>
    <property type="nucleotide sequence ID" value="XM_047419563.1"/>
</dbReference>
<dbReference type="RefSeq" id="XP_047275520.1">
    <molecule id="Q9Y232-4"/>
    <property type="nucleotide sequence ID" value="XM_047419564.1"/>
</dbReference>
<dbReference type="RefSeq" id="XP_054212800.1">
    <molecule id="Q9Y232-4"/>
    <property type="nucleotide sequence ID" value="XM_054356825.1"/>
</dbReference>
<dbReference type="RefSeq" id="XP_054212801.1">
    <molecule id="Q9Y232-4"/>
    <property type="nucleotide sequence ID" value="XM_054356826.1"/>
</dbReference>
<dbReference type="PDB" id="2DNT">
    <property type="method" value="NMR"/>
    <property type="chains" value="A=63-119"/>
</dbReference>
<dbReference type="PDB" id="2GTR">
    <property type="method" value="X-ray"/>
    <property type="resolution" value="1.90 A"/>
    <property type="chains" value="A/B/C=338-598"/>
</dbReference>
<dbReference type="PDB" id="7N27">
    <property type="method" value="X-ray"/>
    <property type="resolution" value="1.85 A"/>
    <property type="chains" value="A/B/C/D/E/F=62-113"/>
</dbReference>
<dbReference type="PDBsum" id="2DNT"/>
<dbReference type="PDBsum" id="2GTR"/>
<dbReference type="PDBsum" id="7N27"/>
<dbReference type="SMR" id="Q9Y232"/>
<dbReference type="BioGRID" id="114818">
    <property type="interactions" value="99"/>
</dbReference>
<dbReference type="CORUM" id="Q9Y232"/>
<dbReference type="FunCoup" id="Q9Y232">
    <property type="interactions" value="3291"/>
</dbReference>
<dbReference type="IntAct" id="Q9Y232">
    <property type="interactions" value="71"/>
</dbReference>
<dbReference type="MINT" id="Q9Y232"/>
<dbReference type="STRING" id="9606.ENSP00000380718"/>
<dbReference type="BindingDB" id="Q9Y232"/>
<dbReference type="ChEMBL" id="CHEMBL3879827"/>
<dbReference type="GlyGen" id="Q9Y232">
    <property type="glycosylation" value="2 sites, 1 O-linked glycan (2 sites)"/>
</dbReference>
<dbReference type="iPTMnet" id="Q9Y232"/>
<dbReference type="PhosphoSitePlus" id="Q9Y232"/>
<dbReference type="BioMuta" id="CDYL"/>
<dbReference type="DMDM" id="150421527"/>
<dbReference type="jPOST" id="Q9Y232"/>
<dbReference type="MassIVE" id="Q9Y232"/>
<dbReference type="PaxDb" id="9606-ENSP00000380718"/>
<dbReference type="PeptideAtlas" id="Q9Y232"/>
<dbReference type="ProteomicsDB" id="85621">
    <molecule id="Q9Y232-1"/>
</dbReference>
<dbReference type="ProteomicsDB" id="85622">
    <molecule id="Q9Y232-2"/>
</dbReference>
<dbReference type="ProteomicsDB" id="85623">
    <molecule id="Q9Y232-3"/>
</dbReference>
<dbReference type="ProteomicsDB" id="85624">
    <molecule id="Q9Y232-4"/>
</dbReference>
<dbReference type="Pumba" id="Q9Y232"/>
<dbReference type="ABCD" id="Q9Y232">
    <property type="antibodies" value="2 sequenced antibodies"/>
</dbReference>
<dbReference type="Antibodypedia" id="24514">
    <property type="antibodies" value="267 antibodies from 33 providers"/>
</dbReference>
<dbReference type="DNASU" id="9425"/>
<dbReference type="Ensembl" id="ENST00000328908.9">
    <molecule id="Q9Y232-1"/>
    <property type="protein sequence ID" value="ENSP00000330512.5"/>
    <property type="gene ID" value="ENSG00000153046.18"/>
</dbReference>
<dbReference type="Ensembl" id="ENST00000343762.5">
    <molecule id="Q9Y232-4"/>
    <property type="protein sequence ID" value="ENSP00000340908.5"/>
    <property type="gene ID" value="ENSG00000153046.18"/>
</dbReference>
<dbReference type="Ensembl" id="ENST00000397588.8">
    <molecule id="Q9Y232-2"/>
    <property type="protein sequence ID" value="ENSP00000380718.3"/>
    <property type="gene ID" value="ENSG00000153046.18"/>
</dbReference>
<dbReference type="Ensembl" id="ENST00000449732.6">
    <molecule id="Q9Y232-4"/>
    <property type="protein sequence ID" value="ENSP00000394076.2"/>
    <property type="gene ID" value="ENSG00000153046.18"/>
</dbReference>
<dbReference type="GeneID" id="9425"/>
<dbReference type="KEGG" id="hsa:9425"/>
<dbReference type="MANE-Select" id="ENST00000397588.8">
    <molecule id="Q9Y232-2"/>
    <property type="protein sequence ID" value="ENSP00000380718.3"/>
    <property type="RefSeq nucleotide sequence ID" value="NM_004824.4"/>
    <property type="RefSeq protein sequence ID" value="NP_004815.3"/>
</dbReference>
<dbReference type="UCSC" id="uc003mwi.4">
    <molecule id="Q9Y232-1"/>
    <property type="organism name" value="human"/>
</dbReference>
<dbReference type="AGR" id="HGNC:1811"/>
<dbReference type="CTD" id="9425"/>
<dbReference type="DisGeNET" id="9425"/>
<dbReference type="GeneCards" id="CDYL"/>
<dbReference type="HGNC" id="HGNC:1811">
    <property type="gene designation" value="CDYL"/>
</dbReference>
<dbReference type="HPA" id="ENSG00000153046">
    <property type="expression patterns" value="Low tissue specificity"/>
</dbReference>
<dbReference type="MIM" id="603778">
    <property type="type" value="gene"/>
</dbReference>
<dbReference type="neXtProt" id="NX_Q9Y232"/>
<dbReference type="OpenTargets" id="ENSG00000153046"/>
<dbReference type="PharmGKB" id="PA26356"/>
<dbReference type="VEuPathDB" id="HostDB:ENSG00000153046"/>
<dbReference type="eggNOG" id="KOG0016">
    <property type="taxonomic scope" value="Eukaryota"/>
</dbReference>
<dbReference type="eggNOG" id="KOG1911">
    <property type="taxonomic scope" value="Eukaryota"/>
</dbReference>
<dbReference type="GeneTree" id="ENSGT00940000155106"/>
<dbReference type="HOGENOM" id="CLU_009834_24_0_1"/>
<dbReference type="InParanoid" id="Q9Y232"/>
<dbReference type="OMA" id="VPRSPMN"/>
<dbReference type="OrthoDB" id="6357915at2759"/>
<dbReference type="PAN-GO" id="Q9Y232">
    <property type="GO annotations" value="2 GO annotations based on evolutionary models"/>
</dbReference>
<dbReference type="PhylomeDB" id="Q9Y232"/>
<dbReference type="TreeFam" id="TF313375"/>
<dbReference type="BRENDA" id="4.2.1.150">
    <property type="organism ID" value="2681"/>
</dbReference>
<dbReference type="PathwayCommons" id="Q9Y232"/>
<dbReference type="SABIO-RK" id="Q9Y232"/>
<dbReference type="SignaLink" id="Q9Y232"/>
<dbReference type="BioGRID-ORCS" id="9425">
    <property type="hits" value="62 hits in 1175 CRISPR screens"/>
</dbReference>
<dbReference type="ChiTaRS" id="CDYL">
    <property type="organism name" value="human"/>
</dbReference>
<dbReference type="EvolutionaryTrace" id="Q9Y232"/>
<dbReference type="GenomeRNAi" id="9425"/>
<dbReference type="Pharos" id="Q9Y232">
    <property type="development level" value="Tchem"/>
</dbReference>
<dbReference type="PRO" id="PR:Q9Y232"/>
<dbReference type="Proteomes" id="UP000005640">
    <property type="component" value="Chromosome 6"/>
</dbReference>
<dbReference type="RNAct" id="Q9Y232">
    <property type="molecule type" value="protein"/>
</dbReference>
<dbReference type="Bgee" id="ENSG00000153046">
    <property type="expression patterns" value="Expressed in calcaneal tendon and 210 other cell types or tissues"/>
</dbReference>
<dbReference type="ExpressionAtlas" id="Q9Y232">
    <property type="expression patterns" value="baseline and differential"/>
</dbReference>
<dbReference type="GO" id="GO:0005694">
    <property type="term" value="C:chromosome"/>
    <property type="evidence" value="ECO:0000250"/>
    <property type="project" value="UniProtKB"/>
</dbReference>
<dbReference type="GO" id="GO:0005737">
    <property type="term" value="C:cytoplasm"/>
    <property type="evidence" value="ECO:0000250"/>
    <property type="project" value="UniProtKB"/>
</dbReference>
<dbReference type="GO" id="GO:0016607">
    <property type="term" value="C:nuclear speck"/>
    <property type="evidence" value="ECO:0000314"/>
    <property type="project" value="HPA"/>
</dbReference>
<dbReference type="GO" id="GO:0005634">
    <property type="term" value="C:nucleus"/>
    <property type="evidence" value="ECO:0000314"/>
    <property type="project" value="MGI"/>
</dbReference>
<dbReference type="GO" id="GO:0003682">
    <property type="term" value="F:chromatin binding"/>
    <property type="evidence" value="ECO:0000250"/>
    <property type="project" value="UniProtKB"/>
</dbReference>
<dbReference type="GO" id="GO:0120092">
    <property type="term" value="F:crotonyl-CoA hydratase activity"/>
    <property type="evidence" value="ECO:0000314"/>
    <property type="project" value="UniProtKB"/>
</dbReference>
<dbReference type="GO" id="GO:0042802">
    <property type="term" value="F:identical protein binding"/>
    <property type="evidence" value="ECO:0000353"/>
    <property type="project" value="IntAct"/>
</dbReference>
<dbReference type="GO" id="GO:0030674">
    <property type="term" value="F:protein-macromolecule adaptor activity"/>
    <property type="evidence" value="ECO:0000353"/>
    <property type="project" value="UniProtKB"/>
</dbReference>
<dbReference type="GO" id="GO:0003714">
    <property type="term" value="F:transcription corepressor activity"/>
    <property type="evidence" value="ECO:0000315"/>
    <property type="project" value="UniProtKB"/>
</dbReference>
<dbReference type="GO" id="GO:0120094">
    <property type="term" value="P:negative regulation of peptidyl-lysine crotonylation"/>
    <property type="evidence" value="ECO:0000314"/>
    <property type="project" value="UniProtKB"/>
</dbReference>
<dbReference type="GO" id="GO:0060816">
    <property type="term" value="P:random inactivation of X chromosome"/>
    <property type="evidence" value="ECO:0000250"/>
    <property type="project" value="UniProtKB"/>
</dbReference>
<dbReference type="GO" id="GO:0007286">
    <property type="term" value="P:spermatid development"/>
    <property type="evidence" value="ECO:0000250"/>
    <property type="project" value="UniProtKB"/>
</dbReference>
<dbReference type="GO" id="GO:0007283">
    <property type="term" value="P:spermatogenesis"/>
    <property type="evidence" value="ECO:0000304"/>
    <property type="project" value="ProtInc"/>
</dbReference>
<dbReference type="CDD" id="cd18634">
    <property type="entry name" value="CD_CDY"/>
    <property type="match status" value="1"/>
</dbReference>
<dbReference type="CDD" id="cd06558">
    <property type="entry name" value="crotonase-like"/>
    <property type="match status" value="1"/>
</dbReference>
<dbReference type="FunFam" id="1.10.12.10:FF:000006">
    <property type="entry name" value="Chromodomain Y-like protein"/>
    <property type="match status" value="1"/>
</dbReference>
<dbReference type="FunFam" id="3.90.226.10:FF:000012">
    <property type="entry name" value="Chromodomain Y-like protein 2"/>
    <property type="match status" value="1"/>
</dbReference>
<dbReference type="FunFam" id="2.40.50.40:FF:000029">
    <property type="entry name" value="chromodomain Y-like protein isoform X1"/>
    <property type="match status" value="1"/>
</dbReference>
<dbReference type="Gene3D" id="2.40.50.40">
    <property type="match status" value="1"/>
</dbReference>
<dbReference type="Gene3D" id="3.90.226.10">
    <property type="entry name" value="2-enoyl-CoA Hydratase, Chain A, domain 1"/>
    <property type="match status" value="1"/>
</dbReference>
<dbReference type="Gene3D" id="1.10.12.10">
    <property type="entry name" value="Lyase 2-enoyl-coa Hydratase, Chain A, domain 2"/>
    <property type="match status" value="1"/>
</dbReference>
<dbReference type="InterPro" id="IPR016197">
    <property type="entry name" value="Chromo-like_dom_sf"/>
</dbReference>
<dbReference type="InterPro" id="IPR000953">
    <property type="entry name" value="Chromo/chromo_shadow_dom"/>
</dbReference>
<dbReference type="InterPro" id="IPR023780">
    <property type="entry name" value="Chromo_domain"/>
</dbReference>
<dbReference type="InterPro" id="IPR023779">
    <property type="entry name" value="Chromodomain_CS"/>
</dbReference>
<dbReference type="InterPro" id="IPR029045">
    <property type="entry name" value="ClpP/crotonase-like_dom_sf"/>
</dbReference>
<dbReference type="InterPro" id="IPR051053">
    <property type="entry name" value="ECH/Chromodomain_protein"/>
</dbReference>
<dbReference type="InterPro" id="IPR001753">
    <property type="entry name" value="Enoyl-CoA_hydra/iso"/>
</dbReference>
<dbReference type="InterPro" id="IPR014748">
    <property type="entry name" value="Enoyl-CoA_hydra_C"/>
</dbReference>
<dbReference type="PANTHER" id="PTHR43684">
    <property type="match status" value="1"/>
</dbReference>
<dbReference type="PANTHER" id="PTHR43684:SF5">
    <property type="entry name" value="CHROMODOMAIN Y-LIKE PROTEIN"/>
    <property type="match status" value="1"/>
</dbReference>
<dbReference type="Pfam" id="PF00385">
    <property type="entry name" value="Chromo"/>
    <property type="match status" value="1"/>
</dbReference>
<dbReference type="Pfam" id="PF00378">
    <property type="entry name" value="ECH_1"/>
    <property type="match status" value="1"/>
</dbReference>
<dbReference type="SMART" id="SM00298">
    <property type="entry name" value="CHROMO"/>
    <property type="match status" value="1"/>
</dbReference>
<dbReference type="SUPFAM" id="SSF54160">
    <property type="entry name" value="Chromo domain-like"/>
    <property type="match status" value="1"/>
</dbReference>
<dbReference type="SUPFAM" id="SSF52096">
    <property type="entry name" value="ClpP/crotonase"/>
    <property type="match status" value="1"/>
</dbReference>
<dbReference type="PROSITE" id="PS00598">
    <property type="entry name" value="CHROMO_1"/>
    <property type="match status" value="1"/>
</dbReference>
<dbReference type="PROSITE" id="PS50013">
    <property type="entry name" value="CHROMO_2"/>
    <property type="match status" value="1"/>
</dbReference>
<organism>
    <name type="scientific">Homo sapiens</name>
    <name type="common">Human</name>
    <dbReference type="NCBI Taxonomy" id="9606"/>
    <lineage>
        <taxon>Eukaryota</taxon>
        <taxon>Metazoa</taxon>
        <taxon>Chordata</taxon>
        <taxon>Craniata</taxon>
        <taxon>Vertebrata</taxon>
        <taxon>Euteleostomi</taxon>
        <taxon>Mammalia</taxon>
        <taxon>Eutheria</taxon>
        <taxon>Euarchontoglires</taxon>
        <taxon>Primates</taxon>
        <taxon>Haplorrhini</taxon>
        <taxon>Catarrhini</taxon>
        <taxon>Hominidae</taxon>
        <taxon>Homo</taxon>
    </lineage>
</organism>
<comment type="function">
    <molecule>Isoform 2</molecule>
    <text evidence="1 9 11 12 13 14 16">Chromatin reader protein that recognizes and binds histone H3 trimethylated at 'Lys-9', dimethylated at 'Lys-27' and trimethylated at 'Lys-27' (H3K9me3, H3K27me2 and H3K27me3, respectively) (PubMed:19808672, PubMed:28402439). Part of multimeric repressive chromatin complexes, where it is required for transmission and restoration of repressive histone marks, thereby preserving the epigenetic landscape (PubMed:28402439). Required for chromatin targeting and maximal enzymatic activity of Polycomb repressive complex 2 (PRC2); acts as a positive regulator of PRC2 activity by bridging the pre-existing histone H3K27me3 and newly recruited PRC2 on neighboring nucleosomes (PubMed:22009739). Acts as a corepressor for REST by facilitating histone-lysine N-methyltransferase EHMT2 recruitment and H3K9 dimethylation at REST target genes for repression (PubMed:19061646). Involved in X chromosome inactivation in females: recruited to Xist RNA-coated X chromosome and facilitates propagation of H3K9me2 by anchoring EHMT2 (By similarity). Promotes EZH2 accumulation and H3K27me3 methylation at DNA double strand breaks (DSBs), thereby facilitating transcriptional repression at sites of DNA damage and homology-directed repair of DSBs (PubMed:29177481). Required for neuronal migration during brain development by repressing expression of RHOA (By similarity). By repressing the expression of SCN8A, contributes to the inhibition of intrinsic neuronal excitability and epileptogenesis (By similarity). In addition to acting as a chromatin reader, acts as a hydro-lyase (PubMed:28803779). Shows crotonyl-coA hydratase activity by mediating the conversion of crotonyl-CoA ((2E)-butenoyl-CoA) to beta-hydroxybutyryl-CoA (3-hydroxybutanoyl-CoA), thereby acting as a negative regulator of histone crotonylation (PubMed:28803779). Histone crotonylation is required during spermatogenesis; down-regulation of histone crotonylation by CDYL regulates the reactivation of sex chromosome-linked genes in round spermatids and histone replacement in elongating spermatids (By similarity). By regulating histone crotonylation and trimethylation of H3K27, may be involved in stress-induced depression-like behaviors, possibly by regulating VGF expression (By similarity).</text>
</comment>
<comment type="function">
    <molecule>Isoform 1</molecule>
    <text evidence="11">Not able to recognize and bind histone H3K9me3, histone H3K27me2 and histone H3K27me3, due to the presence of a N-terminal extension that inactivates the chromo domain (PubMed:19808672).</text>
</comment>
<comment type="function">
    <molecule>Isoform 3</molecule>
    <text evidence="11">Not able to recognize and bind histone H3K9me3, histone H3K27me2 and histone H3K27me3, due to the absence of the chromo domain (PubMed:19808672). Acts as a negative regulator of isoform 2 by displacing isoform 2 from chromatin.</text>
</comment>
<comment type="catalytic activity">
    <reaction evidence="14">
        <text>3-hydroxybutanoyl-CoA = (2E)-butenoyl-CoA + H2O</text>
        <dbReference type="Rhea" id="RHEA:45584"/>
        <dbReference type="ChEBI" id="CHEBI:15377"/>
        <dbReference type="ChEBI" id="CHEBI:57332"/>
        <dbReference type="ChEBI" id="CHEBI:78611"/>
    </reaction>
</comment>
<comment type="biophysicochemical properties">
    <kinetics>
        <KM evidence="14">73.75 uM for (2E)-butenoyl-CoA</KM>
    </kinetics>
</comment>
<comment type="subunit">
    <text evidence="1 9 11 12 13">Forms multimers and multimerization is required for stable binding to chromatin (PubMed:19808672). Interacts with HDAC1 and HDAC2 via its C-terminal acetyl-CoA-binding domain (By similarity). Interacts with EZH2, EED, SUZ12, REST, EHMT1 and EHMT2 (PubMed:19061646). Part of a complex containing at least CDYL, REST, WIZ, SETB1, EHMT1 and EHMT2. Part of a complex containing at least CDYL, MIER1, MIER2, HDAC1 and HDAC2 (PubMed:22009739). Interacts with CHAF1A and CHAF1B; bridging the CAF-1 complex to the MCM2-7 (MCM) complex (PubMed:28402439). Interacts with MCM3 and MCM5; bridging the CAF-1 complex to the MCM2-7 (MCM) complex (PubMed:28402439). Recruited to Xist RNA-coated X chromosome (By similarity). Interacts with EHMT2 and PRDM9; interaction only takes place when PRDM9 is bound to hotspot DNA (By similarity).</text>
</comment>
<comment type="interaction">
    <interactant intactId="EBI-1387386">
        <id>Q9Y232</id>
    </interactant>
    <interactant intactId="EBI-713291">
        <id>P51114</id>
        <label>FXR1</label>
    </interactant>
    <organismsDiffer>false</organismsDiffer>
    <experiments>2</experiments>
</comment>
<comment type="interaction">
    <interactant intactId="EBI-1387386">
        <id>Q9Y232</id>
    </interactant>
    <interactant intactId="EBI-79722">
        <id>P68431</id>
        <label>H3C12</label>
    </interactant>
    <organismsDiffer>false</organismsDiffer>
    <experiments>5</experiments>
</comment>
<comment type="interaction">
    <interactant intactId="EBI-10986891">
        <id>Q9Y232-2</id>
    </interactant>
    <interactant intactId="EBI-10986891">
        <id>Q9Y232-2</id>
        <label>CDYL</label>
    </interactant>
    <organismsDiffer>false</organismsDiffer>
    <experiments>3</experiments>
</comment>
<comment type="interaction">
    <interactant intactId="EBI-10986891">
        <id>Q9Y232-2</id>
    </interactant>
    <interactant intactId="EBI-2851213">
        <id>Q8N5M4</id>
        <label>TTC9C</label>
    </interactant>
    <organismsDiffer>false</organismsDiffer>
    <experiments>3</experiments>
</comment>
<comment type="subcellular location">
    <molecule>Isoform 2</molecule>
    <subcellularLocation>
        <location evidence="8 11 16">Nucleus</location>
    </subcellularLocation>
    <subcellularLocation>
        <location evidence="11 16">Chromosome</location>
    </subcellularLocation>
    <text evidence="11 16">Recognizes and binds histone H3 trimethylated at 'Lys-9', dimethylated at 'Lys-27' and trimethylated at 'Lys-27' (H3K9me3, H3K27me2 and H3K27me3, respectively) on chromatin (PubMed:19808672). Multimerization is required for chromatin-binding (PubMed:19808672). Recruited to sites of DNA double strand breaks in a PARP1-dependent fashion (PubMed:29177481).</text>
</comment>
<comment type="alternative products">
    <event type="alternative splicing"/>
    <isoform>
        <id>Q9Y232-1</id>
        <name>1</name>
        <name evidence="20">a</name>
        <name evidence="20">CDYL1a</name>
        <sequence type="displayed"/>
    </isoform>
    <isoform>
        <id>Q9Y232-2</id>
        <name>2</name>
        <name evidence="20">b</name>
        <name evidence="20">CDYL1b</name>
        <sequence type="described" ref="VSP_026383 VSP_026384"/>
    </isoform>
    <isoform>
        <id>Q9Y232-3</id>
        <name>3</name>
        <name evidence="20">c</name>
        <name evidence="20">CDYL1c</name>
        <sequence type="described" ref="VSP_026382"/>
    </isoform>
    <isoform>
        <id>Q9Y232-4</id>
        <name>4</name>
        <sequence type="described" ref="VSP_041025"/>
    </isoform>
</comment>
<comment type="tissue specificity">
    <text evidence="11 15">Expressed in the hippocampus with reduced expression in epileptic tissue compared to normal adjacent tissue (at protein level) (PubMed:28842554). Ubiquitous (PubMed:19808672). Expressed at moderate levels in all tissues examined (PubMed:19808672). Isoform 2: Most abundantly expressed isoform (PubMed:19808672).</text>
</comment>
<comment type="domain">
    <text evidence="23">The chromo domain recognizes and binds histone H3K9me3, histone H3K27me2 and histone H3K27me3.</text>
</comment>
<comment type="domain">
    <text evidence="14 16">The acetyl-CoA-binding domain mediates crotonyl-coA hydratase activity (PubMed:28803779). The acetyl-CoA-binding domain is required for recruitment to sites of DNA double strand breaks and for binding to poly (ADP ribose) moieties (PubMed:29177481).</text>
</comment>
<comment type="miscellaneous">
    <molecule>Isoform 2</molecule>
    <text evidence="11">Major isoform.</text>
</comment>
<comment type="caution">
    <text evidence="6 9 10 12">Was initially reported to display histone acetyltransferase activity, with a preference for histone H4 (PubMed:12072557). Such activity is however unsure in vivo. Histone acetyltransferase activity would be in contradiction with the function of the protein in corepressor complexes (PubMed:19061646, PubMed:22009739). Moreover, crystallographic studies demonstrated that it does not share any similarity with other acetyltransferases and instead forms a crotonase-like fold (PubMed:19507244).</text>
</comment>
<comment type="sequence caution" evidence="22">
    <conflict type="miscellaneous discrepancy">
        <sequence resource="EMBL-CDS" id="CAB43304"/>
    </conflict>
</comment>